<organism>
    <name type="scientific">Arabidopsis thaliana</name>
    <name type="common">Mouse-ear cress</name>
    <dbReference type="NCBI Taxonomy" id="3702"/>
    <lineage>
        <taxon>Eukaryota</taxon>
        <taxon>Viridiplantae</taxon>
        <taxon>Streptophyta</taxon>
        <taxon>Embryophyta</taxon>
        <taxon>Tracheophyta</taxon>
        <taxon>Spermatophyta</taxon>
        <taxon>Magnoliopsida</taxon>
        <taxon>eudicotyledons</taxon>
        <taxon>Gunneridae</taxon>
        <taxon>Pentapetalae</taxon>
        <taxon>rosids</taxon>
        <taxon>malvids</taxon>
        <taxon>Brassicales</taxon>
        <taxon>Brassicaceae</taxon>
        <taxon>Camelineae</taxon>
        <taxon>Arabidopsis</taxon>
    </lineage>
</organism>
<proteinExistence type="evidence at transcript level"/>
<feature type="signal peptide" evidence="2">
    <location>
        <begin position="1"/>
        <end position="20"/>
    </location>
</feature>
<feature type="chain" id="PRO_0000268995" description="Classical arabinogalactan protein 6">
    <location>
        <begin position="21"/>
        <end position="126"/>
    </location>
</feature>
<feature type="propeptide" id="PRO_0000268996" description="Removed in mature form" evidence="2">
    <location>
        <begin position="127"/>
        <end position="150"/>
    </location>
</feature>
<feature type="region of interest" description="Disordered" evidence="3">
    <location>
        <begin position="19"/>
        <end position="131"/>
    </location>
</feature>
<feature type="compositionally biased region" description="Low complexity" evidence="3">
    <location>
        <begin position="19"/>
        <end position="75"/>
    </location>
</feature>
<feature type="compositionally biased region" description="Low complexity" evidence="3">
    <location>
        <begin position="85"/>
        <end position="98"/>
    </location>
</feature>
<feature type="lipid moiety-binding region" description="GPI-anchor amidated serine" evidence="2">
    <location>
        <position position="126"/>
    </location>
</feature>
<feature type="sequence conflict" description="In Ref. 1; CAB42531." evidence="5" ref="1">
    <original>T</original>
    <variation>A</variation>
    <location>
        <position position="12"/>
    </location>
</feature>
<feature type="sequence conflict" description="In Ref. 1; CAB42531." evidence="5" ref="1">
    <original>P</original>
    <variation>T</variation>
    <location>
        <position position="32"/>
    </location>
</feature>
<feature type="sequence conflict" description="In Ref. 1; CAB42531." evidence="5" ref="1">
    <original>T</original>
    <variation>A</variation>
    <location>
        <position position="142"/>
    </location>
</feature>
<protein>
    <recommendedName>
        <fullName>Classical arabinogalactan protein 6</fullName>
    </recommendedName>
</protein>
<sequence length="150" mass="14569">MARQFVVLVLLTLTIATAFAADAPSASPKKSPSPTAAPTKAPTATTKAPSAPTKAPAAAPKSSSASSPKASSPAAEGPVPEDDYSASSPSDSAEAPTVSSPPAPTPDSTSAADGPSDGPTAESPKSGAVTTAKFSVVGTVATVGFFFFSF</sequence>
<dbReference type="EMBL" id="AJ012459">
    <property type="protein sequence ID" value="CAB42531.1"/>
    <property type="molecule type" value="mRNA"/>
</dbReference>
<dbReference type="EMBL" id="AL163817">
    <property type="protein sequence ID" value="CAB87777.1"/>
    <property type="molecule type" value="Genomic_DNA"/>
</dbReference>
<dbReference type="EMBL" id="CP002688">
    <property type="protein sequence ID" value="AED92024.1"/>
    <property type="molecule type" value="Genomic_DNA"/>
</dbReference>
<dbReference type="EMBL" id="BT006161">
    <property type="protein sequence ID" value="AAP04145.1"/>
    <property type="molecule type" value="mRNA"/>
</dbReference>
<dbReference type="EMBL" id="BT008563">
    <property type="protein sequence ID" value="AAP40390.1"/>
    <property type="molecule type" value="mRNA"/>
</dbReference>
<dbReference type="EMBL" id="AK229630">
    <property type="protein sequence ID" value="BAF01475.1"/>
    <property type="molecule type" value="mRNA"/>
</dbReference>
<dbReference type="PIR" id="T48611">
    <property type="entry name" value="T48611"/>
</dbReference>
<dbReference type="PIR" id="T52587">
    <property type="entry name" value="T52587"/>
</dbReference>
<dbReference type="RefSeq" id="NP_196942.1">
    <property type="nucleotide sequence ID" value="NM_121442.3"/>
</dbReference>
<dbReference type="BioGRID" id="16566">
    <property type="interactions" value="2"/>
</dbReference>
<dbReference type="FunCoup" id="Q9LY91">
    <property type="interactions" value="6"/>
</dbReference>
<dbReference type="STRING" id="3702.Q9LY91"/>
<dbReference type="GlyGen" id="Q9LY91">
    <property type="glycosylation" value="3 sites"/>
</dbReference>
<dbReference type="PaxDb" id="3702-AT5G14380.1"/>
<dbReference type="EnsemblPlants" id="AT5G14380.1">
    <property type="protein sequence ID" value="AT5G14380.1"/>
    <property type="gene ID" value="AT5G14380"/>
</dbReference>
<dbReference type="GeneID" id="831289"/>
<dbReference type="Gramene" id="AT5G14380.1">
    <property type="protein sequence ID" value="AT5G14380.1"/>
    <property type="gene ID" value="AT5G14380"/>
</dbReference>
<dbReference type="KEGG" id="ath:AT5G14380"/>
<dbReference type="Araport" id="AT5G14380"/>
<dbReference type="TAIR" id="AT5G14380">
    <property type="gene designation" value="AGP6"/>
</dbReference>
<dbReference type="eggNOG" id="ENOG502SDBC">
    <property type="taxonomic scope" value="Eukaryota"/>
</dbReference>
<dbReference type="HOGENOM" id="CLU_1878253_0_0_1"/>
<dbReference type="InParanoid" id="Q9LY91"/>
<dbReference type="OMA" id="CVAAWAF"/>
<dbReference type="PRO" id="PR:Q9LY91"/>
<dbReference type="Proteomes" id="UP000006548">
    <property type="component" value="Chromosome 5"/>
</dbReference>
<dbReference type="ExpressionAtlas" id="Q9LY91">
    <property type="expression patterns" value="baseline and differential"/>
</dbReference>
<dbReference type="GO" id="GO:0031012">
    <property type="term" value="C:extracellular matrix"/>
    <property type="evidence" value="ECO:0000314"/>
    <property type="project" value="TAIR"/>
</dbReference>
<dbReference type="GO" id="GO:0005886">
    <property type="term" value="C:plasma membrane"/>
    <property type="evidence" value="ECO:0007669"/>
    <property type="project" value="UniProtKB-SubCell"/>
</dbReference>
<dbReference type="GO" id="GO:0098552">
    <property type="term" value="C:side of membrane"/>
    <property type="evidence" value="ECO:0007669"/>
    <property type="project" value="UniProtKB-KW"/>
</dbReference>
<dbReference type="GO" id="GO:0009860">
    <property type="term" value="P:pollen tube growth"/>
    <property type="evidence" value="ECO:0000315"/>
    <property type="project" value="TAIR"/>
</dbReference>
<dbReference type="GO" id="GO:0010208">
    <property type="term" value="P:pollen wall assembly"/>
    <property type="evidence" value="ECO:0000314"/>
    <property type="project" value="UniProtKB"/>
</dbReference>
<comment type="function">
    <text evidence="1 4">Proteoglycan that seems to be implicated in diverse developmental roles such as differentiation, cell-cell recognition, embryogenesis and programmed cell death (By similarity). Plays an important role during the formation of the nexine layer of the pollen wall (PubMed:25336567).</text>
</comment>
<comment type="subcellular location">
    <subcellularLocation>
        <location evidence="5">Cell membrane</location>
        <topology evidence="5">Lipid-anchor</topology>
        <topology evidence="5">GPI-anchor</topology>
    </subcellularLocation>
</comment>
<comment type="tissue specificity">
    <text evidence="4">Expressed in the anthers.</text>
</comment>
<comment type="developmental stage">
    <text evidence="4">Initially detected in the tapetum and microsporocytes during meiosis. Highest expression during the tetrad stage. After microspores were released from tetrad, slightly detected in the tapetum and microspores.</text>
</comment>
<comment type="induction">
    <text evidence="4">Up-regulated by AHL16/TEK.</text>
</comment>
<comment type="PTM">
    <text evidence="1">O-glycosylated on the hydroxyproline residues.</text>
</comment>
<comment type="similarity">
    <text evidence="5">Belongs to the classical AGP family.</text>
</comment>
<name>AGP6_ARATH</name>
<evidence type="ECO:0000250" key="1"/>
<evidence type="ECO:0000255" key="2"/>
<evidence type="ECO:0000256" key="3">
    <source>
        <dbReference type="SAM" id="MobiDB-lite"/>
    </source>
</evidence>
<evidence type="ECO:0000269" key="4">
    <source>
    </source>
</evidence>
<evidence type="ECO:0000305" key="5"/>
<gene>
    <name type="primary">AGP6</name>
    <name type="ordered locus">At5g14380</name>
    <name type="ORF">F18O22_170</name>
</gene>
<reference key="1">
    <citation type="journal article" date="1999" name="Electrophoresis">
        <title>Glycosylphosphatidylinositol-anchored cell-surface proteins from Arabidopsis.</title>
        <authorList>
            <person name="Sherrier D.J."/>
            <person name="Prime T.A."/>
            <person name="Dupree P."/>
        </authorList>
    </citation>
    <scope>NUCLEOTIDE SEQUENCE [MRNA]</scope>
    <source>
        <strain>cv. Columbia</strain>
    </source>
</reference>
<reference key="2">
    <citation type="journal article" date="2000" name="Nature">
        <title>Sequence and analysis of chromosome 5 of the plant Arabidopsis thaliana.</title>
        <authorList>
            <person name="Tabata S."/>
            <person name="Kaneko T."/>
            <person name="Nakamura Y."/>
            <person name="Kotani H."/>
            <person name="Kato T."/>
            <person name="Asamizu E."/>
            <person name="Miyajima N."/>
            <person name="Sasamoto S."/>
            <person name="Kimura T."/>
            <person name="Hosouchi T."/>
            <person name="Kawashima K."/>
            <person name="Kohara M."/>
            <person name="Matsumoto M."/>
            <person name="Matsuno A."/>
            <person name="Muraki A."/>
            <person name="Nakayama S."/>
            <person name="Nakazaki N."/>
            <person name="Naruo K."/>
            <person name="Okumura S."/>
            <person name="Shinpo S."/>
            <person name="Takeuchi C."/>
            <person name="Wada T."/>
            <person name="Watanabe A."/>
            <person name="Yamada M."/>
            <person name="Yasuda M."/>
            <person name="Sato S."/>
            <person name="de la Bastide M."/>
            <person name="Huang E."/>
            <person name="Spiegel L."/>
            <person name="Gnoj L."/>
            <person name="O'Shaughnessy A."/>
            <person name="Preston R."/>
            <person name="Habermann K."/>
            <person name="Murray J."/>
            <person name="Johnson D."/>
            <person name="Rohlfing T."/>
            <person name="Nelson J."/>
            <person name="Stoneking T."/>
            <person name="Pepin K."/>
            <person name="Spieth J."/>
            <person name="Sekhon M."/>
            <person name="Armstrong J."/>
            <person name="Becker M."/>
            <person name="Belter E."/>
            <person name="Cordum H."/>
            <person name="Cordes M."/>
            <person name="Courtney L."/>
            <person name="Courtney W."/>
            <person name="Dante M."/>
            <person name="Du H."/>
            <person name="Edwards J."/>
            <person name="Fryman J."/>
            <person name="Haakensen B."/>
            <person name="Lamar E."/>
            <person name="Latreille P."/>
            <person name="Leonard S."/>
            <person name="Meyer R."/>
            <person name="Mulvaney E."/>
            <person name="Ozersky P."/>
            <person name="Riley A."/>
            <person name="Strowmatt C."/>
            <person name="Wagner-McPherson C."/>
            <person name="Wollam A."/>
            <person name="Yoakum M."/>
            <person name="Bell M."/>
            <person name="Dedhia N."/>
            <person name="Parnell L."/>
            <person name="Shah R."/>
            <person name="Rodriguez M."/>
            <person name="Hoon See L."/>
            <person name="Vil D."/>
            <person name="Baker J."/>
            <person name="Kirchoff K."/>
            <person name="Toth K."/>
            <person name="King L."/>
            <person name="Bahret A."/>
            <person name="Miller B."/>
            <person name="Marra M.A."/>
            <person name="Martienssen R."/>
            <person name="McCombie W.R."/>
            <person name="Wilson R.K."/>
            <person name="Murphy G."/>
            <person name="Bancroft I."/>
            <person name="Volckaert G."/>
            <person name="Wambutt R."/>
            <person name="Duesterhoeft A."/>
            <person name="Stiekema W."/>
            <person name="Pohl T."/>
            <person name="Entian K.-D."/>
            <person name="Terryn N."/>
            <person name="Hartley N."/>
            <person name="Bent E."/>
            <person name="Johnson S."/>
            <person name="Langham S.-A."/>
            <person name="McCullagh B."/>
            <person name="Robben J."/>
            <person name="Grymonprez B."/>
            <person name="Zimmermann W."/>
            <person name="Ramsperger U."/>
            <person name="Wedler H."/>
            <person name="Balke K."/>
            <person name="Wedler E."/>
            <person name="Peters S."/>
            <person name="van Staveren M."/>
            <person name="Dirkse W."/>
            <person name="Mooijman P."/>
            <person name="Klein Lankhorst R."/>
            <person name="Weitzenegger T."/>
            <person name="Bothe G."/>
            <person name="Rose M."/>
            <person name="Hauf J."/>
            <person name="Berneiser S."/>
            <person name="Hempel S."/>
            <person name="Feldpausch M."/>
            <person name="Lamberth S."/>
            <person name="Villarroel R."/>
            <person name="Gielen J."/>
            <person name="Ardiles W."/>
            <person name="Bents O."/>
            <person name="Lemcke K."/>
            <person name="Kolesov G."/>
            <person name="Mayer K.F.X."/>
            <person name="Rudd S."/>
            <person name="Schoof H."/>
            <person name="Schueller C."/>
            <person name="Zaccaria P."/>
            <person name="Mewes H.-W."/>
            <person name="Bevan M."/>
            <person name="Fransz P.F."/>
        </authorList>
    </citation>
    <scope>NUCLEOTIDE SEQUENCE [LARGE SCALE GENOMIC DNA]</scope>
    <source>
        <strain>cv. Columbia</strain>
    </source>
</reference>
<reference key="3">
    <citation type="journal article" date="2017" name="Plant J.">
        <title>Araport11: a complete reannotation of the Arabidopsis thaliana reference genome.</title>
        <authorList>
            <person name="Cheng C.Y."/>
            <person name="Krishnakumar V."/>
            <person name="Chan A.P."/>
            <person name="Thibaud-Nissen F."/>
            <person name="Schobel S."/>
            <person name="Town C.D."/>
        </authorList>
    </citation>
    <scope>GENOME REANNOTATION</scope>
    <source>
        <strain>cv. Columbia</strain>
    </source>
</reference>
<reference key="4">
    <citation type="journal article" date="2003" name="Science">
        <title>Empirical analysis of transcriptional activity in the Arabidopsis genome.</title>
        <authorList>
            <person name="Yamada K."/>
            <person name="Lim J."/>
            <person name="Dale J.M."/>
            <person name="Chen H."/>
            <person name="Shinn P."/>
            <person name="Palm C.J."/>
            <person name="Southwick A.M."/>
            <person name="Wu H.C."/>
            <person name="Kim C.J."/>
            <person name="Nguyen M."/>
            <person name="Pham P.K."/>
            <person name="Cheuk R.F."/>
            <person name="Karlin-Newmann G."/>
            <person name="Liu S.X."/>
            <person name="Lam B."/>
            <person name="Sakano H."/>
            <person name="Wu T."/>
            <person name="Yu G."/>
            <person name="Miranda M."/>
            <person name="Quach H.L."/>
            <person name="Tripp M."/>
            <person name="Chang C.H."/>
            <person name="Lee J.M."/>
            <person name="Toriumi M.J."/>
            <person name="Chan M.M."/>
            <person name="Tang C.C."/>
            <person name="Onodera C.S."/>
            <person name="Deng J.M."/>
            <person name="Akiyama K."/>
            <person name="Ansari Y."/>
            <person name="Arakawa T."/>
            <person name="Banh J."/>
            <person name="Banno F."/>
            <person name="Bowser L."/>
            <person name="Brooks S.Y."/>
            <person name="Carninci P."/>
            <person name="Chao Q."/>
            <person name="Choy N."/>
            <person name="Enju A."/>
            <person name="Goldsmith A.D."/>
            <person name="Gurjal M."/>
            <person name="Hansen N.F."/>
            <person name="Hayashizaki Y."/>
            <person name="Johnson-Hopson C."/>
            <person name="Hsuan V.W."/>
            <person name="Iida K."/>
            <person name="Karnes M."/>
            <person name="Khan S."/>
            <person name="Koesema E."/>
            <person name="Ishida J."/>
            <person name="Jiang P.X."/>
            <person name="Jones T."/>
            <person name="Kawai J."/>
            <person name="Kamiya A."/>
            <person name="Meyers C."/>
            <person name="Nakajima M."/>
            <person name="Narusaka M."/>
            <person name="Seki M."/>
            <person name="Sakurai T."/>
            <person name="Satou M."/>
            <person name="Tamse R."/>
            <person name="Vaysberg M."/>
            <person name="Wallender E.K."/>
            <person name="Wong C."/>
            <person name="Yamamura Y."/>
            <person name="Yuan S."/>
            <person name="Shinozaki K."/>
            <person name="Davis R.W."/>
            <person name="Theologis A."/>
            <person name="Ecker J.R."/>
        </authorList>
    </citation>
    <scope>NUCLEOTIDE SEQUENCE [LARGE SCALE MRNA]</scope>
    <source>
        <strain>cv. Columbia</strain>
    </source>
</reference>
<reference key="5">
    <citation type="submission" date="2006-07" db="EMBL/GenBank/DDBJ databases">
        <title>Large-scale analysis of RIKEN Arabidopsis full-length (RAFL) cDNAs.</title>
        <authorList>
            <person name="Totoki Y."/>
            <person name="Seki M."/>
            <person name="Ishida J."/>
            <person name="Nakajima M."/>
            <person name="Enju A."/>
            <person name="Kamiya A."/>
            <person name="Narusaka M."/>
            <person name="Shin-i T."/>
            <person name="Nakagawa M."/>
            <person name="Sakamoto N."/>
            <person name="Oishi K."/>
            <person name="Kohara Y."/>
            <person name="Kobayashi M."/>
            <person name="Toyoda A."/>
            <person name="Sakaki Y."/>
            <person name="Sakurai T."/>
            <person name="Iida K."/>
            <person name="Akiyama K."/>
            <person name="Satou M."/>
            <person name="Toyoda T."/>
            <person name="Konagaya A."/>
            <person name="Carninci P."/>
            <person name="Kawai J."/>
            <person name="Hayashizaki Y."/>
            <person name="Shinozaki K."/>
        </authorList>
    </citation>
    <scope>NUCLEOTIDE SEQUENCE [LARGE SCALE MRNA]</scope>
    <source>
        <strain>cv. Columbia</strain>
    </source>
</reference>
<reference key="6">
    <citation type="journal article" date="2002" name="Plant Physiol.">
        <title>Using genomic resources to guide research directions. The arabinogalactan protein gene family as a test case.</title>
        <authorList>
            <person name="Schultz C.J."/>
            <person name="Rumsewicz M.P."/>
            <person name="Johnson K.L."/>
            <person name="Jones B.J."/>
            <person name="Gaspar Y.M."/>
            <person name="Bacic A."/>
        </authorList>
    </citation>
    <scope>GENE FAMILY</scope>
    <scope>NOMENCLATURE</scope>
</reference>
<reference key="7">
    <citation type="journal article" date="2014" name="Mol. Plant">
        <title>Arabidopsis AT-hook protein TEK positively regulates the expression of arabinogalactan proteins in controlling nexine layer formation in the pollen wall.</title>
        <authorList>
            <person name="Jia Q.S."/>
            <person name="Zhu J."/>
            <person name="Xu X.F."/>
            <person name="Lou Y."/>
            <person name="Zhang Z.L."/>
            <person name="Zhang Z.P."/>
            <person name="Yang Z.N."/>
        </authorList>
    </citation>
    <scope>FUNCTION</scope>
    <scope>INDUCTION</scope>
    <scope>TISSUE SPECIFICITY</scope>
    <scope>DEVELOPMENTAL STAGE</scope>
</reference>
<accession>Q9LY91</accession>
<accession>Q9XFR4</accession>
<keyword id="KW-1003">Cell membrane</keyword>
<keyword id="KW-0325">Glycoprotein</keyword>
<keyword id="KW-0336">GPI-anchor</keyword>
<keyword id="KW-0449">Lipoprotein</keyword>
<keyword id="KW-0472">Membrane</keyword>
<keyword id="KW-0654">Proteoglycan</keyword>
<keyword id="KW-1185">Reference proteome</keyword>
<keyword id="KW-0732">Signal</keyword>